<comment type="function">
    <text evidence="1">Has antibacterial activity.</text>
</comment>
<comment type="subcellular location">
    <subcellularLocation>
        <location evidence="1">Secreted</location>
    </subcellularLocation>
</comment>
<comment type="similarity">
    <text evidence="3">Belongs to the beta-defensin family.</text>
</comment>
<evidence type="ECO:0000250" key="1"/>
<evidence type="ECO:0000255" key="2"/>
<evidence type="ECO:0000305" key="3"/>
<organism>
    <name type="scientific">Pan troglodytes</name>
    <name type="common">Chimpanzee</name>
    <dbReference type="NCBI Taxonomy" id="9598"/>
    <lineage>
        <taxon>Eukaryota</taxon>
        <taxon>Metazoa</taxon>
        <taxon>Chordata</taxon>
        <taxon>Craniata</taxon>
        <taxon>Vertebrata</taxon>
        <taxon>Euteleostomi</taxon>
        <taxon>Mammalia</taxon>
        <taxon>Eutheria</taxon>
        <taxon>Euarchontoglires</taxon>
        <taxon>Primates</taxon>
        <taxon>Haplorrhini</taxon>
        <taxon>Catarrhini</taxon>
        <taxon>Hominidae</taxon>
        <taxon>Pan</taxon>
    </lineage>
</organism>
<feature type="signal peptide" evidence="2">
    <location>
        <begin position="1"/>
        <end status="unknown"/>
    </location>
</feature>
<feature type="chain" id="PRO_0000045339" description="Beta-defensin 112">
    <location>
        <begin status="unknown"/>
        <end position="113"/>
    </location>
</feature>
<feature type="disulfide bond" evidence="1">
    <location>
        <begin position="54"/>
        <end position="82"/>
    </location>
</feature>
<feature type="disulfide bond" evidence="1">
    <location>
        <begin position="61"/>
        <end position="75"/>
    </location>
</feature>
<feature type="disulfide bond" evidence="1">
    <location>
        <begin position="65"/>
        <end position="83"/>
    </location>
</feature>
<proteinExistence type="inferred from homology"/>
<sequence length="113" mass="12995">MKLLTTICRLKLEKMYSKTNTSSTIFEKARHGTEKISTARSEGHHITFSRWKACTAIGGRCKNLCDDSEFRISYCSRPTTRCCVTECDPTDPNNWIPKDSVGTQEWYPKDSRH</sequence>
<keyword id="KW-0044">Antibiotic</keyword>
<keyword id="KW-0929">Antimicrobial</keyword>
<keyword id="KW-0211">Defensin</keyword>
<keyword id="KW-1015">Disulfide bond</keyword>
<keyword id="KW-1185">Reference proteome</keyword>
<keyword id="KW-0964">Secreted</keyword>
<keyword id="KW-0732">Signal</keyword>
<accession>Q30KL5</accession>
<gene>
    <name type="primary">DEFB112</name>
</gene>
<protein>
    <recommendedName>
        <fullName>Beta-defensin 112</fullName>
    </recommendedName>
    <alternativeName>
        <fullName>Defensin, beta 112</fullName>
    </alternativeName>
</protein>
<name>DB112_PANTR</name>
<dbReference type="EMBL" id="DQ012064">
    <property type="protein sequence ID" value="AAY59795.1"/>
    <property type="molecule type" value="mRNA"/>
</dbReference>
<dbReference type="RefSeq" id="NP_001123233.1">
    <property type="nucleotide sequence ID" value="NM_001129761.1"/>
</dbReference>
<dbReference type="SMR" id="Q30KL5"/>
<dbReference type="FunCoup" id="Q30KL5">
    <property type="interactions" value="1"/>
</dbReference>
<dbReference type="STRING" id="9598.ENSPTRP00000031211"/>
<dbReference type="PaxDb" id="9598-ENSPTRP00000031211"/>
<dbReference type="Ensembl" id="ENSPTRT00000033771.4">
    <property type="protein sequence ID" value="ENSPTRP00000031211.3"/>
    <property type="gene ID" value="ENSPTRG00000018267.4"/>
</dbReference>
<dbReference type="GeneID" id="740680"/>
<dbReference type="KEGG" id="ptr:740680"/>
<dbReference type="CTD" id="245915"/>
<dbReference type="VGNC" id="VGNC:11058">
    <property type="gene designation" value="DEFB112"/>
</dbReference>
<dbReference type="eggNOG" id="ENOG502TDZN">
    <property type="taxonomic scope" value="Eukaryota"/>
</dbReference>
<dbReference type="GeneTree" id="ENSGT00410000029004"/>
<dbReference type="HOGENOM" id="CLU_176668_0_0_1"/>
<dbReference type="InParanoid" id="Q30KL5"/>
<dbReference type="OMA" id="RISYCAR"/>
<dbReference type="OrthoDB" id="9093at9604"/>
<dbReference type="TreeFam" id="TF353195"/>
<dbReference type="Proteomes" id="UP000002277">
    <property type="component" value="Chromosome 6"/>
</dbReference>
<dbReference type="GO" id="GO:0005576">
    <property type="term" value="C:extracellular region"/>
    <property type="evidence" value="ECO:0007669"/>
    <property type="project" value="UniProtKB-SubCell"/>
</dbReference>
<dbReference type="GO" id="GO:0042742">
    <property type="term" value="P:defense response to bacterium"/>
    <property type="evidence" value="ECO:0007669"/>
    <property type="project" value="UniProtKB-KW"/>
</dbReference>
<dbReference type="GO" id="GO:0045087">
    <property type="term" value="P:innate immune response"/>
    <property type="evidence" value="ECO:0007669"/>
    <property type="project" value="InterPro"/>
</dbReference>
<dbReference type="InterPro" id="IPR025933">
    <property type="entry name" value="Beta_defensin_dom"/>
</dbReference>
<dbReference type="Pfam" id="PF13841">
    <property type="entry name" value="Defensin_beta_2"/>
    <property type="match status" value="1"/>
</dbReference>
<reference key="1">
    <citation type="journal article" date="2005" name="Physiol. Genomics">
        <title>Cross-species analysis of the mammalian beta-defensin gene family: presence of syntenic gene clusters and preferential expression in the male reproductive tract.</title>
        <authorList>
            <person name="Patil A.A."/>
            <person name="Cai Y."/>
            <person name="Sang Y."/>
            <person name="Blecha F."/>
            <person name="Zhang G."/>
        </authorList>
    </citation>
    <scope>NUCLEOTIDE SEQUENCE [MRNA]</scope>
</reference>